<organism>
    <name type="scientific">Penicillium janthinellum</name>
    <name type="common">Penicillium vitale</name>
    <dbReference type="NCBI Taxonomy" id="5079"/>
    <lineage>
        <taxon>Eukaryota</taxon>
        <taxon>Fungi</taxon>
        <taxon>Dikarya</taxon>
        <taxon>Ascomycota</taxon>
        <taxon>Pezizomycotina</taxon>
        <taxon>Eurotiomycetes</taxon>
        <taxon>Eurotiomycetidae</taxon>
        <taxon>Eurotiales</taxon>
        <taxon>Aspergillaceae</taxon>
        <taxon>Penicillium</taxon>
    </lineage>
</organism>
<feature type="chain" id="PRO_0000199515" description="Penicillopepsin-1">
    <location>
        <begin position="1"/>
        <end position="323"/>
    </location>
</feature>
<feature type="domain" description="Peptidase A1" evidence="3">
    <location>
        <begin position="17"/>
        <end position="320"/>
    </location>
</feature>
<feature type="active site" evidence="3 5">
    <location>
        <position position="33"/>
    </location>
</feature>
<feature type="active site" evidence="3 5">
    <location>
        <position position="213"/>
    </location>
</feature>
<feature type="glycosylation site" description="O-linked (Man...) serine" evidence="7 8">
    <location>
        <position position="3"/>
    </location>
</feature>
<feature type="glycosylation site" description="O-linked (Man...) threonine" evidence="7 8">
    <location>
        <position position="7"/>
    </location>
</feature>
<feature type="disulfide bond" evidence="3 6 7 8">
    <location>
        <begin position="249"/>
        <end position="283"/>
    </location>
</feature>
<feature type="sequence conflict" description="In Ref. 1; AA sequence." evidence="9" ref="1">
    <original>L</original>
    <variation>V</variation>
    <location>
        <position position="253"/>
    </location>
</feature>
<feature type="sequence conflict" description="In Ref. 1; AA sequence." evidence="9" ref="1">
    <original>S</original>
    <variation>L</variation>
    <location>
        <position position="296"/>
    </location>
</feature>
<feature type="strand" evidence="11">
    <location>
        <begin position="4"/>
        <end position="10"/>
    </location>
</feature>
<feature type="helix" evidence="11">
    <location>
        <begin position="12"/>
        <end position="14"/>
    </location>
</feature>
<feature type="strand" evidence="11">
    <location>
        <begin position="17"/>
        <end position="23"/>
    </location>
</feature>
<feature type="strand" evidence="11">
    <location>
        <begin position="26"/>
        <end position="33"/>
    </location>
</feature>
<feature type="strand" evidence="11">
    <location>
        <begin position="39"/>
        <end position="41"/>
    </location>
</feature>
<feature type="helix" evidence="11">
    <location>
        <begin position="48"/>
        <end position="51"/>
    </location>
</feature>
<feature type="helix" evidence="11">
    <location>
        <begin position="59"/>
        <end position="62"/>
    </location>
</feature>
<feature type="strand" evidence="11">
    <location>
        <begin position="64"/>
        <end position="74"/>
    </location>
</feature>
<feature type="strand" evidence="11">
    <location>
        <begin position="80"/>
        <end position="92"/>
    </location>
</feature>
<feature type="strand" evidence="11">
    <location>
        <begin position="95"/>
        <end position="108"/>
    </location>
</feature>
<feature type="helix" evidence="11">
    <location>
        <begin position="110"/>
        <end position="113"/>
    </location>
</feature>
<feature type="strand" evidence="11">
    <location>
        <begin position="119"/>
        <end position="123"/>
    </location>
</feature>
<feature type="helix" evidence="11">
    <location>
        <begin position="127"/>
        <end position="129"/>
    </location>
</feature>
<feature type="strand" evidence="11">
    <location>
        <begin position="133"/>
        <end position="135"/>
    </location>
</feature>
<feature type="helix" evidence="11">
    <location>
        <begin position="140"/>
        <end position="144"/>
    </location>
</feature>
<feature type="helix" evidence="11">
    <location>
        <begin position="145"/>
        <end position="147"/>
    </location>
</feature>
<feature type="strand" evidence="11">
    <location>
        <begin position="148"/>
        <end position="156"/>
    </location>
</feature>
<feature type="strand" evidence="11">
    <location>
        <begin position="159"/>
        <end position="161"/>
    </location>
</feature>
<feature type="strand" evidence="11">
    <location>
        <begin position="163"/>
        <end position="169"/>
    </location>
</feature>
<feature type="helix" evidence="11">
    <location>
        <begin position="172"/>
        <end position="174"/>
    </location>
</feature>
<feature type="strand" evidence="11">
    <location>
        <begin position="175"/>
        <end position="177"/>
    </location>
</feature>
<feature type="strand" evidence="11">
    <location>
        <begin position="180"/>
        <end position="183"/>
    </location>
</feature>
<feature type="strand" evidence="11">
    <location>
        <begin position="192"/>
        <end position="200"/>
    </location>
</feature>
<feature type="strand" evidence="11">
    <location>
        <begin position="203"/>
        <end position="212"/>
    </location>
</feature>
<feature type="strand" evidence="11">
    <location>
        <begin position="217"/>
        <end position="221"/>
    </location>
</feature>
<feature type="helix" evidence="11">
    <location>
        <begin position="223"/>
        <end position="230"/>
    </location>
</feature>
<feature type="strand" evidence="11">
    <location>
        <begin position="237"/>
        <end position="239"/>
    </location>
</feature>
<feature type="turn" evidence="11">
    <location>
        <begin position="240"/>
        <end position="243"/>
    </location>
</feature>
<feature type="strand" evidence="11">
    <location>
        <begin position="244"/>
        <end position="247"/>
    </location>
</feature>
<feature type="strand" evidence="11">
    <location>
        <begin position="256"/>
        <end position="260"/>
    </location>
</feature>
<feature type="strand" evidence="11">
    <location>
        <begin position="263"/>
        <end position="267"/>
    </location>
</feature>
<feature type="helix" evidence="11">
    <location>
        <begin position="269"/>
        <end position="272"/>
    </location>
</feature>
<feature type="strand" evidence="11">
    <location>
        <begin position="273"/>
        <end position="276"/>
    </location>
</feature>
<feature type="strand" evidence="11">
    <location>
        <begin position="278"/>
        <end position="281"/>
    </location>
</feature>
<feature type="strand" evidence="11">
    <location>
        <begin position="283"/>
        <end position="289"/>
    </location>
</feature>
<feature type="strand" evidence="11">
    <location>
        <begin position="294"/>
        <end position="298"/>
    </location>
</feature>
<feature type="helix" evidence="11">
    <location>
        <begin position="300"/>
        <end position="303"/>
    </location>
</feature>
<feature type="strand" evidence="11">
    <location>
        <begin position="306"/>
        <end position="311"/>
    </location>
</feature>
<feature type="turn" evidence="11">
    <location>
        <begin position="312"/>
        <end position="315"/>
    </location>
</feature>
<feature type="strand" evidence="11">
    <location>
        <begin position="316"/>
        <end position="322"/>
    </location>
</feature>
<accession>P00798</accession>
<comment type="function">
    <text evidence="4">Secreted aspartic endopeptidase that allows assimilation of proteinaceous substrates. The scissile peptide bond is attacked by a nucleophilic water molecule activated by two aspartic residues in the active site. Shows a broad primary substrate specificity. Favors hydrophobic residues at the P1 and P1' positions, but can also activate trypsinogen and hydrolyze the B chain of insulin between positions 'Gly-20' and 'Glu-21'.</text>
</comment>
<comment type="catalytic activity">
    <reaction evidence="4">
        <text>Hydrolysis of proteins with broad specificity similar to that of pepsin A, preferring hydrophobic residues at P1 and P1', but also cleaving 20-Gly-|-Glu-21 in the B chain of insulin. Clots milk, and activates trypsinogen.</text>
        <dbReference type="EC" id="3.4.23.20"/>
    </reaction>
</comment>
<comment type="subunit">
    <text evidence="2">Monomer.</text>
</comment>
<comment type="subcellular location">
    <subcellularLocation>
        <location evidence="1">Secreted</location>
    </subcellularLocation>
</comment>
<comment type="similarity">
    <text evidence="3">Belongs to the peptidase A1 family.</text>
</comment>
<comment type="caution">
    <text evidence="9">The sequence shown is derived from the best amino acid sequence data as modified by the X-ray data.</text>
</comment>
<protein>
    <recommendedName>
        <fullName evidence="10">Penicillopepsin-1</fullName>
        <ecNumber evidence="4">3.4.23.20</ecNumber>
    </recommendedName>
    <alternativeName>
        <fullName>Aspartic protease</fullName>
    </alternativeName>
    <alternativeName>
        <fullName>Peptidase A</fullName>
    </alternativeName>
</protein>
<keyword id="KW-0002">3D-structure</keyword>
<keyword id="KW-0064">Aspartyl protease</keyword>
<keyword id="KW-0903">Direct protein sequencing</keyword>
<keyword id="KW-1015">Disulfide bond</keyword>
<keyword id="KW-0325">Glycoprotein</keyword>
<keyword id="KW-0378">Hydrolase</keyword>
<keyword id="KW-0645">Protease</keyword>
<keyword id="KW-0964">Secreted</keyword>
<reference key="1">
    <citation type="journal article" date="1977" name="Nature">
        <title>Penicillopepsin from Penicillium janthinellum crystal structure at 2.8 A and sequence homology with porcine pepsin.</title>
        <authorList>
            <person name="Hsu I.N."/>
            <person name="Delbaere L.T."/>
            <person name="James M.N."/>
            <person name="Hofmann T."/>
        </authorList>
    </citation>
    <scope>PROTEIN SEQUENCE</scope>
    <scope>X-RAY CRYSTALLOGRAPHY (2.8 ANGSTROMS)</scope>
</reference>
<reference key="2">
    <citation type="journal article" date="1976" name="Can. J. Biochem.">
        <title>Amino acid sequence of penicillopepsin. IV. Myxobacter AL-1 protease II and Staphylococcus aureus protease fragments and homology with pig pepsin and chymosin.</title>
        <authorList>
            <person name="Cunningham A."/>
            <person name="Wang H.M."/>
            <person name="Jones S.R."/>
            <person name="Chiericato G."/>
            <person name="Rao L."/>
            <person name="Harris C.I."/>
            <person name="Rhee S.H."/>
            <person name="Hofmann T."/>
        </authorList>
    </citation>
    <scope>PARTIAL PROTEIN SEQUENCE</scope>
</reference>
<reference key="3">
    <citation type="journal article" date="1983" name="J. Mol. Biol.">
        <title>Structure and refinement of penicillopepsin at 1.8-A resolution.</title>
        <authorList>
            <person name="James M.N.G."/>
            <person name="Sielecki A.R."/>
        </authorList>
    </citation>
    <scope>PROTEIN SEQUENCE</scope>
    <scope>X-RAY CRYSTALLOGRAPHY (1.8 ANGSTROMS)</scope>
    <scope>DISULFIDE BONDS</scope>
</reference>
<reference key="4">
    <citation type="journal article" date="1970" name="Can. J. Biochem.">
        <title>Amino acid sequence around the active site aspartic acid in penicillopepsin.</title>
        <authorList>
            <person name="Sodek J."/>
            <person name="Hofmann T."/>
        </authorList>
    </citation>
    <scope>ACTIVE SITE</scope>
</reference>
<reference key="5">
    <citation type="journal article" date="1971" name="Can. J. Biochem.">
        <title>The specificity of penicillopepsin.</title>
        <authorList>
            <person name="Mains G."/>
            <person name="Takahashi M."/>
            <person name="Sodek J."/>
            <person name="Hofmann T."/>
        </authorList>
    </citation>
    <scope>FUNCTION</scope>
    <scope>CATALYTIC ACTIVITY</scope>
    <scope>SUBSTRATE SPECIFICITY</scope>
</reference>
<reference key="6">
    <citation type="journal article" date="1998" name="Biochemistry">
        <title>Lowering the entropic barrier for binding conformationally flexible inhibitors to enzymes.</title>
        <authorList>
            <person name="Khan A.R."/>
            <person name="Parrish J.C."/>
            <person name="Fraser M.E."/>
            <person name="Smith W.W."/>
            <person name="Bartlett P.A."/>
            <person name="James M.N.G."/>
        </authorList>
    </citation>
    <scope>X-RAY CRYSTALLOGRAPHY (0.95 ANGSTROMS)</scope>
    <scope>GLYCOSYLATION AT SER-3 AND THR-7</scope>
    <scope>DISULFIDE BONDS</scope>
</reference>
<reference key="7">
    <citation type="journal article" date="1998" name="J. Am. Chem. Soc.">
        <title>Macrocyclic inhibitors of penicillopepsin. II. X-Ray crystallographic analyses of penicillopepsin complexed with a P3-P1 macrocyclic peptidyl inhibitor and with its two acyclic analogues.</title>
        <authorList>
            <person name="Ding J."/>
            <person name="Fraser M.E."/>
            <person name="Meyer J.H."/>
            <person name="Bartlett P.A."/>
            <person name="James M.N.G."/>
        </authorList>
    </citation>
    <scope>X-RAY CRYSTALLOGRAPHY (1.25 ANGSTROMS)</scope>
    <scope>GLYCOSYLATION AT SER-3 AND THR-7</scope>
    <scope>DISULFIDE BONDS</scope>
</reference>
<proteinExistence type="evidence at protein level"/>
<sequence>AASGVATNTPTANDEEYITPVTIGGTTLNLNFDTGSADLWVFSTELPASQQSGHSVYNPSATGKELSGYTWSISYGDGSSASGNVFTDSVTVGGVTAHGQAVQAAQQISAQFQQDTNNDGLLGLAFSSINTVQPQSQTTFFDTVKSSLAQPLFAVALKHQQPGVYDFGFIDSSKYTGSLTYTGVDNSQGFWSFNVDSYTAGSQSGDGFSGIADTGTTLLLLDDSVVSQYYSQVSGAQQDSNAGGYVFDCSTNLPDFSVSISGYTATVPGSLINYGPSGDGSTCLGGIQSNSGIGFSIFGDIFLKSQYVVFDSDGPQLGFAPQA</sequence>
<evidence type="ECO:0000250" key="1">
    <source>
        <dbReference type="UniProtKB" id="Q01972"/>
    </source>
</evidence>
<evidence type="ECO:0000250" key="2">
    <source>
        <dbReference type="UniProtKB" id="Q12567"/>
    </source>
</evidence>
<evidence type="ECO:0000255" key="3">
    <source>
        <dbReference type="PROSITE-ProRule" id="PRU01103"/>
    </source>
</evidence>
<evidence type="ECO:0000269" key="4">
    <source>
    </source>
</evidence>
<evidence type="ECO:0000269" key="5">
    <source>
    </source>
</evidence>
<evidence type="ECO:0000269" key="6">
    <source>
    </source>
</evidence>
<evidence type="ECO:0000269" key="7">
    <source>
    </source>
</evidence>
<evidence type="ECO:0000269" key="8">
    <source ref="7"/>
</evidence>
<evidence type="ECO:0000305" key="9"/>
<evidence type="ECO:0000305" key="10">
    <source>
    </source>
</evidence>
<evidence type="ECO:0007829" key="11">
    <source>
        <dbReference type="PDB" id="1BXO"/>
    </source>
</evidence>
<dbReference type="EC" id="3.4.23.20" evidence="4"/>
<dbReference type="PIR" id="A00991">
    <property type="entry name" value="PEPLBJ"/>
</dbReference>
<dbReference type="PDB" id="1APT">
    <property type="method" value="X-ray"/>
    <property type="resolution" value="1.80 A"/>
    <property type="chains" value="E=1-323"/>
</dbReference>
<dbReference type="PDB" id="1APU">
    <property type="method" value="X-ray"/>
    <property type="resolution" value="1.80 A"/>
    <property type="chains" value="E=1-323"/>
</dbReference>
<dbReference type="PDB" id="1APV">
    <property type="method" value="X-ray"/>
    <property type="resolution" value="1.80 A"/>
    <property type="chains" value="E=1-323"/>
</dbReference>
<dbReference type="PDB" id="1APW">
    <property type="method" value="X-ray"/>
    <property type="resolution" value="1.80 A"/>
    <property type="chains" value="E=1-323"/>
</dbReference>
<dbReference type="PDB" id="1BXO">
    <property type="method" value="X-ray"/>
    <property type="resolution" value="0.95 A"/>
    <property type="chains" value="A=1-323"/>
</dbReference>
<dbReference type="PDB" id="1BXQ">
    <property type="method" value="X-ray"/>
    <property type="resolution" value="1.41 A"/>
    <property type="chains" value="A=1-323"/>
</dbReference>
<dbReference type="PDB" id="1PPK">
    <property type="method" value="X-ray"/>
    <property type="resolution" value="1.80 A"/>
    <property type="chains" value="E=1-323"/>
</dbReference>
<dbReference type="PDB" id="1PPL">
    <property type="method" value="X-ray"/>
    <property type="resolution" value="1.70 A"/>
    <property type="chains" value="E=1-323"/>
</dbReference>
<dbReference type="PDB" id="1PPM">
    <property type="method" value="X-ray"/>
    <property type="resolution" value="1.70 A"/>
    <property type="chains" value="E=1-323"/>
</dbReference>
<dbReference type="PDB" id="2WEA">
    <property type="method" value="X-ray"/>
    <property type="resolution" value="1.25 A"/>
    <property type="chains" value="A=1-323"/>
</dbReference>
<dbReference type="PDB" id="2WEB">
    <property type="method" value="X-ray"/>
    <property type="resolution" value="1.50 A"/>
    <property type="chains" value="A=1-323"/>
</dbReference>
<dbReference type="PDB" id="2WEC">
    <property type="method" value="X-ray"/>
    <property type="resolution" value="1.50 A"/>
    <property type="chains" value="A=1-323"/>
</dbReference>
<dbReference type="PDB" id="2WED">
    <property type="method" value="X-ray"/>
    <property type="resolution" value="1.50 A"/>
    <property type="chains" value="A=1-323"/>
</dbReference>
<dbReference type="PDB" id="3APP">
    <property type="method" value="X-ray"/>
    <property type="resolution" value="1.80 A"/>
    <property type="chains" value="A=1-323"/>
</dbReference>
<dbReference type="PDBsum" id="1APT"/>
<dbReference type="PDBsum" id="1APU"/>
<dbReference type="PDBsum" id="1APV"/>
<dbReference type="PDBsum" id="1APW"/>
<dbReference type="PDBsum" id="1BXO"/>
<dbReference type="PDBsum" id="1BXQ"/>
<dbReference type="PDBsum" id="1PPK"/>
<dbReference type="PDBsum" id="1PPL"/>
<dbReference type="PDBsum" id="1PPM"/>
<dbReference type="PDBsum" id="2WEA"/>
<dbReference type="PDBsum" id="2WEB"/>
<dbReference type="PDBsum" id="2WEC"/>
<dbReference type="PDBsum" id="2WED"/>
<dbReference type="PDBsum" id="3APP"/>
<dbReference type="SMR" id="P00798"/>
<dbReference type="BindingDB" id="P00798"/>
<dbReference type="ChEMBL" id="CHEMBL4254"/>
<dbReference type="MEROPS" id="A01.011"/>
<dbReference type="iPTMnet" id="P00798"/>
<dbReference type="BRENDA" id="3.4.23.20">
    <property type="organism ID" value="4621"/>
</dbReference>
<dbReference type="EvolutionaryTrace" id="P00798"/>
<dbReference type="GO" id="GO:0005576">
    <property type="term" value="C:extracellular region"/>
    <property type="evidence" value="ECO:0007669"/>
    <property type="project" value="UniProtKB-SubCell"/>
</dbReference>
<dbReference type="GO" id="GO:0004190">
    <property type="term" value="F:aspartic-type endopeptidase activity"/>
    <property type="evidence" value="ECO:0007669"/>
    <property type="project" value="UniProtKB-KW"/>
</dbReference>
<dbReference type="GO" id="GO:0006508">
    <property type="term" value="P:proteolysis"/>
    <property type="evidence" value="ECO:0007669"/>
    <property type="project" value="UniProtKB-KW"/>
</dbReference>
<dbReference type="CDD" id="cd06097">
    <property type="entry name" value="Aspergillopepsin_like"/>
    <property type="match status" value="1"/>
</dbReference>
<dbReference type="FunFam" id="2.40.70.10:FF:000024">
    <property type="entry name" value="Endothiapepsin"/>
    <property type="match status" value="1"/>
</dbReference>
<dbReference type="FunFam" id="2.40.70.10:FF:000026">
    <property type="entry name" value="Endothiapepsin"/>
    <property type="match status" value="1"/>
</dbReference>
<dbReference type="Gene3D" id="2.40.70.10">
    <property type="entry name" value="Acid Proteases"/>
    <property type="match status" value="2"/>
</dbReference>
<dbReference type="InterPro" id="IPR001461">
    <property type="entry name" value="Aspartic_peptidase_A1"/>
</dbReference>
<dbReference type="InterPro" id="IPR001969">
    <property type="entry name" value="Aspartic_peptidase_AS"/>
</dbReference>
<dbReference type="InterPro" id="IPR034163">
    <property type="entry name" value="Aspergillopepsin-like_cat_dom"/>
</dbReference>
<dbReference type="InterPro" id="IPR033121">
    <property type="entry name" value="PEPTIDASE_A1"/>
</dbReference>
<dbReference type="InterPro" id="IPR021109">
    <property type="entry name" value="Peptidase_aspartic_dom_sf"/>
</dbReference>
<dbReference type="PANTHER" id="PTHR47966:SF2">
    <property type="entry name" value="ASPERGILLOPEPSIN-1-RELATED"/>
    <property type="match status" value="1"/>
</dbReference>
<dbReference type="PANTHER" id="PTHR47966">
    <property type="entry name" value="BETA-SITE APP-CLEAVING ENZYME, ISOFORM A-RELATED"/>
    <property type="match status" value="1"/>
</dbReference>
<dbReference type="Pfam" id="PF00026">
    <property type="entry name" value="Asp"/>
    <property type="match status" value="1"/>
</dbReference>
<dbReference type="PRINTS" id="PR00792">
    <property type="entry name" value="PEPSIN"/>
</dbReference>
<dbReference type="SUPFAM" id="SSF50630">
    <property type="entry name" value="Acid proteases"/>
    <property type="match status" value="1"/>
</dbReference>
<dbReference type="PROSITE" id="PS00141">
    <property type="entry name" value="ASP_PROTEASE"/>
    <property type="match status" value="2"/>
</dbReference>
<dbReference type="PROSITE" id="PS51767">
    <property type="entry name" value="PEPTIDASE_A1"/>
    <property type="match status" value="1"/>
</dbReference>
<name>PEPA1_PENJA</name>